<comment type="function">
    <text evidence="2 3 4">Involved in peroxisomal proliferation. Promotes peroxisomal duplication, aggregation or elongation without fission.</text>
</comment>
<comment type="subunit">
    <text evidence="4 5">Homooligomer. Interacts with ARC5 and FIS1B on peroxisomes.</text>
</comment>
<comment type="subcellular location">
    <subcellularLocation>
        <location evidence="3 4 5">Peroxisome membrane</location>
        <topology evidence="3 4 5">Multi-pass membrane protein</topology>
    </subcellularLocation>
</comment>
<comment type="tissue specificity">
    <text evidence="2 3">Expressed in developing siliques.</text>
</comment>
<comment type="induction">
    <text evidence="3">Up-regulated during senescence.</text>
</comment>
<comment type="similarity">
    <text evidence="6">Belongs to the peroxin-11 family.</text>
</comment>
<keyword id="KW-0007">Acetylation</keyword>
<keyword id="KW-0472">Membrane</keyword>
<keyword id="KW-0576">Peroxisome</keyword>
<keyword id="KW-0962">Peroxisome biogenesis</keyword>
<keyword id="KW-1185">Reference proteome</keyword>
<keyword id="KW-0812">Transmembrane</keyword>
<keyword id="KW-1133">Transmembrane helix</keyword>
<gene>
    <name type="primary">PEX11D</name>
    <name type="ordered locus">At2g45740</name>
    <name type="ORF">F4I18.28</name>
</gene>
<organism>
    <name type="scientific">Arabidopsis thaliana</name>
    <name type="common">Mouse-ear cress</name>
    <dbReference type="NCBI Taxonomy" id="3702"/>
    <lineage>
        <taxon>Eukaryota</taxon>
        <taxon>Viridiplantae</taxon>
        <taxon>Streptophyta</taxon>
        <taxon>Embryophyta</taxon>
        <taxon>Tracheophyta</taxon>
        <taxon>Spermatophyta</taxon>
        <taxon>Magnoliopsida</taxon>
        <taxon>eudicotyledons</taxon>
        <taxon>Gunneridae</taxon>
        <taxon>Pentapetalae</taxon>
        <taxon>rosids</taxon>
        <taxon>malvids</taxon>
        <taxon>Brassicales</taxon>
        <taxon>Brassicaceae</taxon>
        <taxon>Camelineae</taxon>
        <taxon>Arabidopsis</taxon>
    </lineage>
</organism>
<sequence length="236" mass="25944">MGTTLDVSRAELALVVMYLNKAEARDKLCRAIQYGSKFLSGGQPGTAQNVDKSTSLARKVFRLFKFVNDLHGLISPVPKGTPLPLVLLGKSKNALLSTFLFLDQIVWLGRSGIYKNKERAELLGRISLFCWMGSSVCTTLVEVGEMGRLSSSMKKIEKGLKNGNKYQDEDYRAKLKKSNERSLALIKSAMDIVVAAGLLQLAPTKITPRVTGAFGFITSIISCYQLLPTRPKIKTP</sequence>
<protein>
    <recommendedName>
        <fullName>Peroxisomal membrane protein 11D</fullName>
    </recommendedName>
    <alternativeName>
        <fullName>Peroxin-11D</fullName>
        <shortName>AtPEX11d</shortName>
    </alternativeName>
</protein>
<name>PX11D_ARATH</name>
<accession>O80845</accession>
<accession>Q93XZ4</accession>
<proteinExistence type="evidence at protein level"/>
<feature type="initiator methionine" description="Removed" evidence="7">
    <location>
        <position position="1"/>
    </location>
</feature>
<feature type="chain" id="PRO_0000330298" description="Peroxisomal membrane protein 11D">
    <location>
        <begin position="2"/>
        <end position="236"/>
    </location>
</feature>
<feature type="topological domain" description="Cytoplasmic" evidence="2">
    <location>
        <begin position="2"/>
        <end position="92"/>
    </location>
</feature>
<feature type="transmembrane region" description="Helical" evidence="1">
    <location>
        <begin position="93"/>
        <end position="109"/>
    </location>
</feature>
<feature type="topological domain" description="Lumenal" evidence="2">
    <location>
        <begin position="110"/>
        <end position="207"/>
    </location>
</feature>
<feature type="transmembrane region" description="Helical" evidence="1">
    <location>
        <begin position="208"/>
        <end position="227"/>
    </location>
</feature>
<feature type="topological domain" description="Cytoplasmic" evidence="2">
    <location>
        <begin position="228"/>
        <end position="236"/>
    </location>
</feature>
<feature type="modified residue" description="N-acetylglycine" evidence="7">
    <location>
        <position position="2"/>
    </location>
</feature>
<reference key="1">
    <citation type="journal article" date="1999" name="Nature">
        <title>Sequence and analysis of chromosome 2 of the plant Arabidopsis thaliana.</title>
        <authorList>
            <person name="Lin X."/>
            <person name="Kaul S."/>
            <person name="Rounsley S.D."/>
            <person name="Shea T.P."/>
            <person name="Benito M.-I."/>
            <person name="Town C.D."/>
            <person name="Fujii C.Y."/>
            <person name="Mason T.M."/>
            <person name="Bowman C.L."/>
            <person name="Barnstead M.E."/>
            <person name="Feldblyum T.V."/>
            <person name="Buell C.R."/>
            <person name="Ketchum K.A."/>
            <person name="Lee J.J."/>
            <person name="Ronning C.M."/>
            <person name="Koo H.L."/>
            <person name="Moffat K.S."/>
            <person name="Cronin L.A."/>
            <person name="Shen M."/>
            <person name="Pai G."/>
            <person name="Van Aken S."/>
            <person name="Umayam L."/>
            <person name="Tallon L.J."/>
            <person name="Gill J.E."/>
            <person name="Adams M.D."/>
            <person name="Carrera A.J."/>
            <person name="Creasy T.H."/>
            <person name="Goodman H.M."/>
            <person name="Somerville C.R."/>
            <person name="Copenhaver G.P."/>
            <person name="Preuss D."/>
            <person name="Nierman W.C."/>
            <person name="White O."/>
            <person name="Eisen J.A."/>
            <person name="Salzberg S.L."/>
            <person name="Fraser C.M."/>
            <person name="Venter J.C."/>
        </authorList>
    </citation>
    <scope>NUCLEOTIDE SEQUENCE [LARGE SCALE GENOMIC DNA]</scope>
    <source>
        <strain>cv. Columbia</strain>
    </source>
</reference>
<reference key="2">
    <citation type="journal article" date="2017" name="Plant J.">
        <title>Araport11: a complete reannotation of the Arabidopsis thaliana reference genome.</title>
        <authorList>
            <person name="Cheng C.Y."/>
            <person name="Krishnakumar V."/>
            <person name="Chan A.P."/>
            <person name="Thibaud-Nissen F."/>
            <person name="Schobel S."/>
            <person name="Town C.D."/>
        </authorList>
    </citation>
    <scope>GENOME REANNOTATION</scope>
    <source>
        <strain>cv. Columbia</strain>
    </source>
</reference>
<reference key="3">
    <citation type="journal article" date="2003" name="Science">
        <title>Empirical analysis of transcriptional activity in the Arabidopsis genome.</title>
        <authorList>
            <person name="Yamada K."/>
            <person name="Lim J."/>
            <person name="Dale J.M."/>
            <person name="Chen H."/>
            <person name="Shinn P."/>
            <person name="Palm C.J."/>
            <person name="Southwick A.M."/>
            <person name="Wu H.C."/>
            <person name="Kim C.J."/>
            <person name="Nguyen M."/>
            <person name="Pham P.K."/>
            <person name="Cheuk R.F."/>
            <person name="Karlin-Newmann G."/>
            <person name="Liu S.X."/>
            <person name="Lam B."/>
            <person name="Sakano H."/>
            <person name="Wu T."/>
            <person name="Yu G."/>
            <person name="Miranda M."/>
            <person name="Quach H.L."/>
            <person name="Tripp M."/>
            <person name="Chang C.H."/>
            <person name="Lee J.M."/>
            <person name="Toriumi M.J."/>
            <person name="Chan M.M."/>
            <person name="Tang C.C."/>
            <person name="Onodera C.S."/>
            <person name="Deng J.M."/>
            <person name="Akiyama K."/>
            <person name="Ansari Y."/>
            <person name="Arakawa T."/>
            <person name="Banh J."/>
            <person name="Banno F."/>
            <person name="Bowser L."/>
            <person name="Brooks S.Y."/>
            <person name="Carninci P."/>
            <person name="Chao Q."/>
            <person name="Choy N."/>
            <person name="Enju A."/>
            <person name="Goldsmith A.D."/>
            <person name="Gurjal M."/>
            <person name="Hansen N.F."/>
            <person name="Hayashizaki Y."/>
            <person name="Johnson-Hopson C."/>
            <person name="Hsuan V.W."/>
            <person name="Iida K."/>
            <person name="Karnes M."/>
            <person name="Khan S."/>
            <person name="Koesema E."/>
            <person name="Ishida J."/>
            <person name="Jiang P.X."/>
            <person name="Jones T."/>
            <person name="Kawai J."/>
            <person name="Kamiya A."/>
            <person name="Meyers C."/>
            <person name="Nakajima M."/>
            <person name="Narusaka M."/>
            <person name="Seki M."/>
            <person name="Sakurai T."/>
            <person name="Satou M."/>
            <person name="Tamse R."/>
            <person name="Vaysberg M."/>
            <person name="Wallender E.K."/>
            <person name="Wong C."/>
            <person name="Yamamura Y."/>
            <person name="Yuan S."/>
            <person name="Shinozaki K."/>
            <person name="Davis R.W."/>
            <person name="Theologis A."/>
            <person name="Ecker J.R."/>
        </authorList>
    </citation>
    <scope>NUCLEOTIDE SEQUENCE [LARGE SCALE MRNA]</scope>
    <source>
        <strain>cv. Columbia</strain>
    </source>
</reference>
<reference key="4">
    <citation type="submission" date="2002-03" db="EMBL/GenBank/DDBJ databases">
        <title>Full-length cDNA from Arabidopsis thaliana.</title>
        <authorList>
            <person name="Brover V.V."/>
            <person name="Troukhan M.E."/>
            <person name="Alexandrov N.A."/>
            <person name="Lu Y.-P."/>
            <person name="Flavell R.B."/>
            <person name="Feldmann K.A."/>
        </authorList>
    </citation>
    <scope>NUCLEOTIDE SEQUENCE [LARGE SCALE MRNA]</scope>
</reference>
<reference key="5">
    <citation type="journal article" date="2006" name="J. Cell Sci.">
        <title>Five Arabidopsis peroxin 11 homologs individually promote peroxisome elongation, duplication or aggregation.</title>
        <authorList>
            <person name="Lingard M.J."/>
            <person name="Trelease R.N."/>
        </authorList>
    </citation>
    <scope>FUNCTION</scope>
    <scope>TOPOLOGY</scope>
    <scope>TISSUE SPECIFICITY</scope>
    <scope>NOMENCLATURE</scope>
</reference>
<reference key="6">
    <citation type="journal article" date="2007" name="Plant Cell">
        <title>The PEROXIN11 protein family controls peroxisome proliferation in Arabidopsis.</title>
        <authorList>
            <person name="Orth T."/>
            <person name="Reumann S."/>
            <person name="Zhang X."/>
            <person name="Fan J."/>
            <person name="Wenzel D."/>
            <person name="Quan S."/>
            <person name="Hu J."/>
        </authorList>
    </citation>
    <scope>FUNCTION</scope>
    <scope>SUBCELLULAR LOCATION</scope>
    <scope>TISSUE SPECIFICITY</scope>
    <scope>INDUCTION</scope>
    <scope>GENE FAMILY</scope>
</reference>
<reference key="7">
    <citation type="journal article" date="2008" name="Plant Cell">
        <title>Arabidopsis PEROXIN11c-e, FISSION1b, and DYNAMIN-RELATED PROTEIN3A cooperate in cell cycle-associated replication of peroxisomes.</title>
        <authorList>
            <person name="Lingard M.J."/>
            <person name="Gidda S.K."/>
            <person name="Bingham S."/>
            <person name="Rothstein S.J."/>
            <person name="Mullen R.T."/>
            <person name="Trelease R.N."/>
        </authorList>
    </citation>
    <scope>FUNCTION</scope>
    <scope>SUBUNIT</scope>
    <scope>INTERACTION WITH FIS1B</scope>
    <scope>SUBCELLULAR LOCATION</scope>
</reference>
<reference key="8">
    <citation type="journal article" date="2010" name="Plant Cell">
        <title>The Arabidopsis chloroplast division protein DYNAMIN-RELATED PROTEIN5B also mediates peroxisome division.</title>
        <authorList>
            <person name="Zhang X."/>
            <person name="Hu J."/>
        </authorList>
    </citation>
    <scope>INTERACTION WITH ARC5 AND FIS1B</scope>
    <scope>SUBCELLULAR LOCATION</scope>
    <scope>SELF-INTERACTION</scope>
</reference>
<reference key="9">
    <citation type="journal article" date="2012" name="Mol. Cell. Proteomics">
        <title>Comparative large-scale characterisation of plant vs. mammal proteins reveals similar and idiosyncratic N-alpha acetylation features.</title>
        <authorList>
            <person name="Bienvenut W.V."/>
            <person name="Sumpton D."/>
            <person name="Martinez A."/>
            <person name="Lilla S."/>
            <person name="Espagne C."/>
            <person name="Meinnel T."/>
            <person name="Giglione C."/>
        </authorList>
    </citation>
    <scope>ACETYLATION [LARGE SCALE ANALYSIS] AT GLY-2</scope>
    <scope>CLEAVAGE OF INITIATOR METHIONINE [LARGE SCALE ANALYSIS]</scope>
    <scope>IDENTIFICATION BY MASS SPECTROMETRY [LARGE SCALE ANALYSIS]</scope>
</reference>
<evidence type="ECO:0000255" key="1"/>
<evidence type="ECO:0000269" key="2">
    <source>
    </source>
</evidence>
<evidence type="ECO:0000269" key="3">
    <source>
    </source>
</evidence>
<evidence type="ECO:0000269" key="4">
    <source>
    </source>
</evidence>
<evidence type="ECO:0000269" key="5">
    <source>
    </source>
</evidence>
<evidence type="ECO:0000305" key="6"/>
<evidence type="ECO:0007744" key="7">
    <source>
    </source>
</evidence>
<dbReference type="EMBL" id="AC004665">
    <property type="protein sequence ID" value="AAC28551.2"/>
    <property type="molecule type" value="Genomic_DNA"/>
</dbReference>
<dbReference type="EMBL" id="CP002685">
    <property type="protein sequence ID" value="AEC10594.1"/>
    <property type="molecule type" value="Genomic_DNA"/>
</dbReference>
<dbReference type="EMBL" id="CP002685">
    <property type="protein sequence ID" value="AEC10595.1"/>
    <property type="molecule type" value="Genomic_DNA"/>
</dbReference>
<dbReference type="EMBL" id="CP002685">
    <property type="protein sequence ID" value="AEC10596.1"/>
    <property type="molecule type" value="Genomic_DNA"/>
</dbReference>
<dbReference type="EMBL" id="AY054520">
    <property type="protein sequence ID" value="AAK96711.1"/>
    <property type="molecule type" value="mRNA"/>
</dbReference>
<dbReference type="EMBL" id="AY084943">
    <property type="protein sequence ID" value="AAM61504.1"/>
    <property type="molecule type" value="mRNA"/>
</dbReference>
<dbReference type="PIR" id="T02473">
    <property type="entry name" value="T02473"/>
</dbReference>
<dbReference type="RefSeq" id="NP_001031544.1">
    <property type="nucleotide sequence ID" value="NM_001036467.3"/>
</dbReference>
<dbReference type="RefSeq" id="NP_566055.1">
    <property type="nucleotide sequence ID" value="NM_130137.6"/>
</dbReference>
<dbReference type="RefSeq" id="NP_850441.1">
    <property type="nucleotide sequence ID" value="NM_180110.5"/>
</dbReference>
<dbReference type="BioGRID" id="4518">
    <property type="interactions" value="1"/>
</dbReference>
<dbReference type="FunCoup" id="O80845">
    <property type="interactions" value="350"/>
</dbReference>
<dbReference type="STRING" id="3702.O80845"/>
<dbReference type="iPTMnet" id="O80845"/>
<dbReference type="PaxDb" id="3702-AT2G45740.1"/>
<dbReference type="ProteomicsDB" id="226023"/>
<dbReference type="EnsemblPlants" id="AT2G45740.1">
    <property type="protein sequence ID" value="AT2G45740.1"/>
    <property type="gene ID" value="AT2G45740"/>
</dbReference>
<dbReference type="EnsemblPlants" id="AT2G45740.2">
    <property type="protein sequence ID" value="AT2G45740.2"/>
    <property type="gene ID" value="AT2G45740"/>
</dbReference>
<dbReference type="EnsemblPlants" id="AT2G45740.3">
    <property type="protein sequence ID" value="AT2G45740.3"/>
    <property type="gene ID" value="AT2G45740"/>
</dbReference>
<dbReference type="GeneID" id="819182"/>
<dbReference type="Gramene" id="AT2G45740.1">
    <property type="protein sequence ID" value="AT2G45740.1"/>
    <property type="gene ID" value="AT2G45740"/>
</dbReference>
<dbReference type="Gramene" id="AT2G45740.2">
    <property type="protein sequence ID" value="AT2G45740.2"/>
    <property type="gene ID" value="AT2G45740"/>
</dbReference>
<dbReference type="Gramene" id="AT2G45740.3">
    <property type="protein sequence ID" value="AT2G45740.3"/>
    <property type="gene ID" value="AT2G45740"/>
</dbReference>
<dbReference type="KEGG" id="ath:AT2G45740"/>
<dbReference type="Araport" id="AT2G45740"/>
<dbReference type="TAIR" id="AT2G45740">
    <property type="gene designation" value="PEX11D"/>
</dbReference>
<dbReference type="eggNOG" id="KOG4186">
    <property type="taxonomic scope" value="Eukaryota"/>
</dbReference>
<dbReference type="HOGENOM" id="CLU_075417_0_0_1"/>
<dbReference type="InParanoid" id="O80845"/>
<dbReference type="OMA" id="FCWMAGT"/>
<dbReference type="OrthoDB" id="411017at2759"/>
<dbReference type="PhylomeDB" id="O80845"/>
<dbReference type="PRO" id="PR:O80845"/>
<dbReference type="Proteomes" id="UP000006548">
    <property type="component" value="Chromosome 2"/>
</dbReference>
<dbReference type="ExpressionAtlas" id="O80845">
    <property type="expression patterns" value="baseline and differential"/>
</dbReference>
<dbReference type="GO" id="GO:0009507">
    <property type="term" value="C:chloroplast"/>
    <property type="evidence" value="ECO:0007005"/>
    <property type="project" value="TAIR"/>
</dbReference>
<dbReference type="GO" id="GO:0005829">
    <property type="term" value="C:cytosol"/>
    <property type="evidence" value="ECO:0007005"/>
    <property type="project" value="TAIR"/>
</dbReference>
<dbReference type="GO" id="GO:0005739">
    <property type="term" value="C:mitochondrion"/>
    <property type="evidence" value="ECO:0007005"/>
    <property type="project" value="TAIR"/>
</dbReference>
<dbReference type="GO" id="GO:0005778">
    <property type="term" value="C:peroxisomal membrane"/>
    <property type="evidence" value="ECO:0007669"/>
    <property type="project" value="UniProtKB-SubCell"/>
</dbReference>
<dbReference type="GO" id="GO:0005777">
    <property type="term" value="C:peroxisome"/>
    <property type="evidence" value="ECO:0000314"/>
    <property type="project" value="UniProtKB"/>
</dbReference>
<dbReference type="GO" id="GO:0042802">
    <property type="term" value="F:identical protein binding"/>
    <property type="evidence" value="ECO:0000314"/>
    <property type="project" value="UniProtKB"/>
</dbReference>
<dbReference type="GO" id="GO:0016559">
    <property type="term" value="P:peroxisome fission"/>
    <property type="evidence" value="ECO:0000314"/>
    <property type="project" value="UniProtKB"/>
</dbReference>
<dbReference type="GO" id="GO:0007031">
    <property type="term" value="P:peroxisome organization"/>
    <property type="evidence" value="ECO:0000315"/>
    <property type="project" value="TAIR"/>
</dbReference>
<dbReference type="GO" id="GO:0044375">
    <property type="term" value="P:regulation of peroxisome size"/>
    <property type="evidence" value="ECO:0000314"/>
    <property type="project" value="UniProtKB"/>
</dbReference>
<dbReference type="InterPro" id="IPR008733">
    <property type="entry name" value="PEX11"/>
</dbReference>
<dbReference type="PANTHER" id="PTHR12652">
    <property type="entry name" value="PEROXISOMAL BIOGENESIS FACTOR 11"/>
    <property type="match status" value="1"/>
</dbReference>
<dbReference type="PANTHER" id="PTHR12652:SF10">
    <property type="entry name" value="PEROXISOMAL MEMBRANE PROTEIN 11C-RELATED"/>
    <property type="match status" value="1"/>
</dbReference>
<dbReference type="Pfam" id="PF05648">
    <property type="entry name" value="PEX11"/>
    <property type="match status" value="1"/>
</dbReference>